<sequence length="294" mass="33788">MRFVIVTGLSGAGKTQAIRSLEDLGFFCVDNLPPTLIPKFAEACYQTEGKIKKIALVIDIRGGKFFDDLFESLKYLKEEGYKYEILFLDASDEVLIKRFKESRRKHPLSPDGRILNGISMERNRLREVKDRADNIINTSELATRELREAINEIYGEQDQIENQLVITVLSFGFKYGIPLDSDLVFDVRFLPNPYYIKELKQYSGKDKKVSDYVMSFDVTNKFVNRLEDMLNFLIPNYFKEGKRQLIICIGCTGGRHRSVAIANTIYEGLKSKGHKVNIDHRDINEDIHKGGKKL</sequence>
<proteinExistence type="inferred from homology"/>
<organism>
    <name type="scientific">Clostridium botulinum (strain 657 / Type Ba4)</name>
    <dbReference type="NCBI Taxonomy" id="515621"/>
    <lineage>
        <taxon>Bacteria</taxon>
        <taxon>Bacillati</taxon>
        <taxon>Bacillota</taxon>
        <taxon>Clostridia</taxon>
        <taxon>Eubacteriales</taxon>
        <taxon>Clostridiaceae</taxon>
        <taxon>Clostridium</taxon>
    </lineage>
</organism>
<keyword id="KW-0067">ATP-binding</keyword>
<keyword id="KW-0342">GTP-binding</keyword>
<keyword id="KW-0547">Nucleotide-binding</keyword>
<feature type="chain" id="PRO_0000383227" description="Nucleotide-binding protein CLJ_B3680">
    <location>
        <begin position="1"/>
        <end position="294"/>
    </location>
</feature>
<feature type="binding site" evidence="1">
    <location>
        <begin position="8"/>
        <end position="15"/>
    </location>
    <ligand>
        <name>ATP</name>
        <dbReference type="ChEBI" id="CHEBI:30616"/>
    </ligand>
</feature>
<feature type="binding site" evidence="1">
    <location>
        <begin position="59"/>
        <end position="62"/>
    </location>
    <ligand>
        <name>GTP</name>
        <dbReference type="ChEBI" id="CHEBI:37565"/>
    </ligand>
</feature>
<gene>
    <name type="ordered locus">CLJ_B3680</name>
</gene>
<protein>
    <recommendedName>
        <fullName evidence="1">Nucleotide-binding protein CLJ_B3680</fullName>
    </recommendedName>
</protein>
<comment type="function">
    <text evidence="1">Displays ATPase and GTPase activities.</text>
</comment>
<comment type="similarity">
    <text evidence="1">Belongs to the RapZ-like family.</text>
</comment>
<dbReference type="EMBL" id="CP001083">
    <property type="protein sequence ID" value="ACQ52600.1"/>
    <property type="molecule type" value="Genomic_DNA"/>
</dbReference>
<dbReference type="SMR" id="C3KV10"/>
<dbReference type="KEGG" id="cbi:CLJ_B3680"/>
<dbReference type="HOGENOM" id="CLU_059558_0_0_9"/>
<dbReference type="Proteomes" id="UP000002333">
    <property type="component" value="Chromosome"/>
</dbReference>
<dbReference type="GO" id="GO:0005524">
    <property type="term" value="F:ATP binding"/>
    <property type="evidence" value="ECO:0007669"/>
    <property type="project" value="UniProtKB-UniRule"/>
</dbReference>
<dbReference type="GO" id="GO:0005525">
    <property type="term" value="F:GTP binding"/>
    <property type="evidence" value="ECO:0007669"/>
    <property type="project" value="UniProtKB-UniRule"/>
</dbReference>
<dbReference type="Gene3D" id="3.40.50.300">
    <property type="entry name" value="P-loop containing nucleotide triphosphate hydrolases"/>
    <property type="match status" value="1"/>
</dbReference>
<dbReference type="HAMAP" id="MF_00636">
    <property type="entry name" value="RapZ_like"/>
    <property type="match status" value="1"/>
</dbReference>
<dbReference type="InterPro" id="IPR027417">
    <property type="entry name" value="P-loop_NTPase"/>
</dbReference>
<dbReference type="InterPro" id="IPR005337">
    <property type="entry name" value="RapZ-like"/>
</dbReference>
<dbReference type="InterPro" id="IPR053930">
    <property type="entry name" value="RapZ-like_N"/>
</dbReference>
<dbReference type="InterPro" id="IPR053931">
    <property type="entry name" value="RapZ_C"/>
</dbReference>
<dbReference type="NCBIfam" id="NF003828">
    <property type="entry name" value="PRK05416.1"/>
    <property type="match status" value="1"/>
</dbReference>
<dbReference type="PANTHER" id="PTHR30448">
    <property type="entry name" value="RNASE ADAPTER PROTEIN RAPZ"/>
    <property type="match status" value="1"/>
</dbReference>
<dbReference type="PANTHER" id="PTHR30448:SF0">
    <property type="entry name" value="RNASE ADAPTER PROTEIN RAPZ"/>
    <property type="match status" value="1"/>
</dbReference>
<dbReference type="Pfam" id="PF22740">
    <property type="entry name" value="PapZ_C"/>
    <property type="match status" value="1"/>
</dbReference>
<dbReference type="Pfam" id="PF03668">
    <property type="entry name" value="RapZ-like_N"/>
    <property type="match status" value="1"/>
</dbReference>
<dbReference type="PIRSF" id="PIRSF005052">
    <property type="entry name" value="P-loopkin"/>
    <property type="match status" value="1"/>
</dbReference>
<dbReference type="SUPFAM" id="SSF52540">
    <property type="entry name" value="P-loop containing nucleoside triphosphate hydrolases"/>
    <property type="match status" value="1"/>
</dbReference>
<reference key="1">
    <citation type="submission" date="2008-05" db="EMBL/GenBank/DDBJ databases">
        <title>Genome sequence of Clostridium botulinum Ba4 strain 657.</title>
        <authorList>
            <person name="Shrivastava S."/>
            <person name="Brown J.L."/>
            <person name="Bruce D."/>
            <person name="Detter C."/>
            <person name="Munk C."/>
            <person name="Smith L.A."/>
            <person name="Smith T.J."/>
            <person name="Sutton G."/>
            <person name="Brettin T.S."/>
        </authorList>
    </citation>
    <scope>NUCLEOTIDE SEQUENCE [LARGE SCALE GENOMIC DNA]</scope>
    <source>
        <strain>657 / Type Ba4</strain>
    </source>
</reference>
<name>Y3680_CLOB6</name>
<accession>C3KV10</accession>
<evidence type="ECO:0000255" key="1">
    <source>
        <dbReference type="HAMAP-Rule" id="MF_00636"/>
    </source>
</evidence>